<comment type="function">
    <text evidence="6 8">Receptor for artemin (ARTN), a growth factor that supports the survival of sensory and sympathetic peripheral neurons (PubMed:31535977, PubMed:9883723). ARTN-binding leads to autophosphorylation and activation of the RET receptor (PubMed:31535977, PubMed:9883723).</text>
</comment>
<comment type="subunit">
    <text evidence="4 5 6">Interacts with ARTN ligand and RET: forms a 2:2:2 ternary complex composed of ARTN ligand, GFRA3 and RET receptor (PubMed:16765900, PubMed:31535977). Interacts with SORL1 (PubMed:23333276).</text>
</comment>
<comment type="interaction">
    <interactant intactId="EBI-15586309">
        <id>O60609</id>
    </interactant>
    <interactant intactId="EBI-15586241">
        <id>Q5T4W7</id>
        <label>ARTN</label>
    </interactant>
    <organismsDiffer>false</organismsDiffer>
    <experiments>4</experiments>
</comment>
<comment type="subcellular location">
    <subcellularLocation>
        <location evidence="7">Cell membrane</location>
        <topology evidence="7">Lipid-anchor</topology>
        <topology evidence="7">GPI-anchor</topology>
    </subcellularLocation>
</comment>
<comment type="alternative products">
    <event type="alternative splicing"/>
    <isoform>
        <id>O60609-1</id>
        <name>1</name>
        <sequence type="displayed"/>
    </isoform>
    <isoform>
        <id>O60609-2</id>
        <name>2</name>
        <sequence type="described" ref="VSP_010942"/>
    </isoform>
</comment>
<comment type="tissue specificity">
    <text evidence="7">Widely expressed in adult and fetus which exhibit a similar pattern. Essentially not expressed in the central nervous system, but highly expressed in several sensory and sympathetic ganglia of the peripheral nervous system. Moderate expression in many non-neuronal tissues, particularly those of the digestive and urogenital systems, but high expression in stomach and appendix. Several types of glandular tissues show low expression. Very low or no expression detected in the hematopoietic system.</text>
</comment>
<comment type="PTM">
    <text evidence="4">N-glycosylated.</text>
</comment>
<comment type="similarity">
    <text evidence="11">Belongs to the GDNFR family.</text>
</comment>
<reference key="1">
    <citation type="journal article" date="1998" name="Proc. Natl. Acad. Sci. U.S.A.">
        <title>GFRalpha3 is an orphan member of the GDNF/neurturin/persephin receptor family.</title>
        <authorList>
            <person name="Baloh R.H."/>
            <person name="Gorodinsky A."/>
            <person name="Golden J.P."/>
            <person name="Tansey M.G."/>
            <person name="Keck C.L."/>
            <person name="Popescu N.C."/>
            <person name="Johnson E.M. Jr."/>
            <person name="Milbrandt J."/>
        </authorList>
    </citation>
    <scope>NUCLEOTIDE SEQUENCE [MRNA] (ISOFORM 1)</scope>
    <scope>SUBCELLULAR LOCATION</scope>
    <scope>TISSUE SPECIFICITY</scope>
</reference>
<reference key="2">
    <citation type="journal article" date="2003" name="Genome Res.">
        <title>The secreted protein discovery initiative (SPDI), a large-scale effort to identify novel human secreted and transmembrane proteins: a bioinformatics assessment.</title>
        <authorList>
            <person name="Clark H.F."/>
            <person name="Gurney A.L."/>
            <person name="Abaya E."/>
            <person name="Baker K."/>
            <person name="Baldwin D.T."/>
            <person name="Brush J."/>
            <person name="Chen J."/>
            <person name="Chow B."/>
            <person name="Chui C."/>
            <person name="Crowley C."/>
            <person name="Currell B."/>
            <person name="Deuel B."/>
            <person name="Dowd P."/>
            <person name="Eaton D."/>
            <person name="Foster J.S."/>
            <person name="Grimaldi C."/>
            <person name="Gu Q."/>
            <person name="Hass P.E."/>
            <person name="Heldens S."/>
            <person name="Huang A."/>
            <person name="Kim H.S."/>
            <person name="Klimowski L."/>
            <person name="Jin Y."/>
            <person name="Johnson S."/>
            <person name="Lee J."/>
            <person name="Lewis L."/>
            <person name="Liao D."/>
            <person name="Mark M.R."/>
            <person name="Robbie E."/>
            <person name="Sanchez C."/>
            <person name="Schoenfeld J."/>
            <person name="Seshagiri S."/>
            <person name="Simmons L."/>
            <person name="Singh J."/>
            <person name="Smith V."/>
            <person name="Stinson J."/>
            <person name="Vagts A."/>
            <person name="Vandlen R.L."/>
            <person name="Watanabe C."/>
            <person name="Wieand D."/>
            <person name="Woods K."/>
            <person name="Xie M.-H."/>
            <person name="Yansura D.G."/>
            <person name="Yi S."/>
            <person name="Yu G."/>
            <person name="Yuan J."/>
            <person name="Zhang M."/>
            <person name="Zhang Z."/>
            <person name="Goddard A.D."/>
            <person name="Wood W.I."/>
            <person name="Godowski P.J."/>
            <person name="Gray A.M."/>
        </authorList>
    </citation>
    <scope>NUCLEOTIDE SEQUENCE [LARGE SCALE MRNA] (ISOFORMS 1 AND 2)</scope>
</reference>
<reference key="3">
    <citation type="journal article" date="2004" name="Nat. Genet.">
        <title>Complete sequencing and characterization of 21,243 full-length human cDNAs.</title>
        <authorList>
            <person name="Ota T."/>
            <person name="Suzuki Y."/>
            <person name="Nishikawa T."/>
            <person name="Otsuki T."/>
            <person name="Sugiyama T."/>
            <person name="Irie R."/>
            <person name="Wakamatsu A."/>
            <person name="Hayashi K."/>
            <person name="Sato H."/>
            <person name="Nagai K."/>
            <person name="Kimura K."/>
            <person name="Makita H."/>
            <person name="Sekine M."/>
            <person name="Obayashi M."/>
            <person name="Nishi T."/>
            <person name="Shibahara T."/>
            <person name="Tanaka T."/>
            <person name="Ishii S."/>
            <person name="Yamamoto J."/>
            <person name="Saito K."/>
            <person name="Kawai Y."/>
            <person name="Isono Y."/>
            <person name="Nakamura Y."/>
            <person name="Nagahari K."/>
            <person name="Murakami K."/>
            <person name="Yasuda T."/>
            <person name="Iwayanagi T."/>
            <person name="Wagatsuma M."/>
            <person name="Shiratori A."/>
            <person name="Sudo H."/>
            <person name="Hosoiri T."/>
            <person name="Kaku Y."/>
            <person name="Kodaira H."/>
            <person name="Kondo H."/>
            <person name="Sugawara M."/>
            <person name="Takahashi M."/>
            <person name="Kanda K."/>
            <person name="Yokoi T."/>
            <person name="Furuya T."/>
            <person name="Kikkawa E."/>
            <person name="Omura Y."/>
            <person name="Abe K."/>
            <person name="Kamihara K."/>
            <person name="Katsuta N."/>
            <person name="Sato K."/>
            <person name="Tanikawa M."/>
            <person name="Yamazaki M."/>
            <person name="Ninomiya K."/>
            <person name="Ishibashi T."/>
            <person name="Yamashita H."/>
            <person name="Murakawa K."/>
            <person name="Fujimori K."/>
            <person name="Tanai H."/>
            <person name="Kimata M."/>
            <person name="Watanabe M."/>
            <person name="Hiraoka S."/>
            <person name="Chiba Y."/>
            <person name="Ishida S."/>
            <person name="Ono Y."/>
            <person name="Takiguchi S."/>
            <person name="Watanabe S."/>
            <person name="Yosida M."/>
            <person name="Hotuta T."/>
            <person name="Kusano J."/>
            <person name="Kanehori K."/>
            <person name="Takahashi-Fujii A."/>
            <person name="Hara H."/>
            <person name="Tanase T.-O."/>
            <person name="Nomura Y."/>
            <person name="Togiya S."/>
            <person name="Komai F."/>
            <person name="Hara R."/>
            <person name="Takeuchi K."/>
            <person name="Arita M."/>
            <person name="Imose N."/>
            <person name="Musashino K."/>
            <person name="Yuuki H."/>
            <person name="Oshima A."/>
            <person name="Sasaki N."/>
            <person name="Aotsuka S."/>
            <person name="Yoshikawa Y."/>
            <person name="Matsunawa H."/>
            <person name="Ichihara T."/>
            <person name="Shiohata N."/>
            <person name="Sano S."/>
            <person name="Moriya S."/>
            <person name="Momiyama H."/>
            <person name="Satoh N."/>
            <person name="Takami S."/>
            <person name="Terashima Y."/>
            <person name="Suzuki O."/>
            <person name="Nakagawa S."/>
            <person name="Senoh A."/>
            <person name="Mizoguchi H."/>
            <person name="Goto Y."/>
            <person name="Shimizu F."/>
            <person name="Wakebe H."/>
            <person name="Hishigaki H."/>
            <person name="Watanabe T."/>
            <person name="Sugiyama A."/>
            <person name="Takemoto M."/>
            <person name="Kawakami B."/>
            <person name="Yamazaki M."/>
            <person name="Watanabe K."/>
            <person name="Kumagai A."/>
            <person name="Itakura S."/>
            <person name="Fukuzumi Y."/>
            <person name="Fujimori Y."/>
            <person name="Komiyama M."/>
            <person name="Tashiro H."/>
            <person name="Tanigami A."/>
            <person name="Fujiwara T."/>
            <person name="Ono T."/>
            <person name="Yamada K."/>
            <person name="Fujii Y."/>
            <person name="Ozaki K."/>
            <person name="Hirao M."/>
            <person name="Ohmori Y."/>
            <person name="Kawabata A."/>
            <person name="Hikiji T."/>
            <person name="Kobatake N."/>
            <person name="Inagaki H."/>
            <person name="Ikema Y."/>
            <person name="Okamoto S."/>
            <person name="Okitani R."/>
            <person name="Kawakami T."/>
            <person name="Noguchi S."/>
            <person name="Itoh T."/>
            <person name="Shigeta K."/>
            <person name="Senba T."/>
            <person name="Matsumura K."/>
            <person name="Nakajima Y."/>
            <person name="Mizuno T."/>
            <person name="Morinaga M."/>
            <person name="Sasaki M."/>
            <person name="Togashi T."/>
            <person name="Oyama M."/>
            <person name="Hata H."/>
            <person name="Watanabe M."/>
            <person name="Komatsu T."/>
            <person name="Mizushima-Sugano J."/>
            <person name="Satoh T."/>
            <person name="Shirai Y."/>
            <person name="Takahashi Y."/>
            <person name="Nakagawa K."/>
            <person name="Okumura K."/>
            <person name="Nagase T."/>
            <person name="Nomura N."/>
            <person name="Kikuchi H."/>
            <person name="Masuho Y."/>
            <person name="Yamashita R."/>
            <person name="Nakai K."/>
            <person name="Yada T."/>
            <person name="Nakamura Y."/>
            <person name="Ohara O."/>
            <person name="Isogai T."/>
            <person name="Sugano S."/>
        </authorList>
    </citation>
    <scope>NUCLEOTIDE SEQUENCE [LARGE SCALE MRNA] (ISOFORMS 1 AND 2)</scope>
    <source>
        <tissue>Lung</tissue>
        <tissue>Substantia nigra</tissue>
    </source>
</reference>
<reference key="4">
    <citation type="submission" date="2005-09" db="EMBL/GenBank/DDBJ databases">
        <authorList>
            <person name="Mural R.J."/>
            <person name="Istrail S."/>
            <person name="Sutton G.G."/>
            <person name="Florea L."/>
            <person name="Halpern A.L."/>
            <person name="Mobarry C.M."/>
            <person name="Lippert R."/>
            <person name="Walenz B."/>
            <person name="Shatkay H."/>
            <person name="Dew I."/>
            <person name="Miller J.R."/>
            <person name="Flanigan M.J."/>
            <person name="Edwards N.J."/>
            <person name="Bolanos R."/>
            <person name="Fasulo D."/>
            <person name="Halldorsson B.V."/>
            <person name="Hannenhalli S."/>
            <person name="Turner R."/>
            <person name="Yooseph S."/>
            <person name="Lu F."/>
            <person name="Nusskern D.R."/>
            <person name="Shue B.C."/>
            <person name="Zheng X.H."/>
            <person name="Zhong F."/>
            <person name="Delcher A.L."/>
            <person name="Huson D.H."/>
            <person name="Kravitz S.A."/>
            <person name="Mouchard L."/>
            <person name="Reinert K."/>
            <person name="Remington K.A."/>
            <person name="Clark A.G."/>
            <person name="Waterman M.S."/>
            <person name="Eichler E.E."/>
            <person name="Adams M.D."/>
            <person name="Hunkapiller M.W."/>
            <person name="Myers E.W."/>
            <person name="Venter J.C."/>
        </authorList>
    </citation>
    <scope>NUCLEOTIDE SEQUENCE [LARGE SCALE GENOMIC DNA]</scope>
</reference>
<reference key="5">
    <citation type="journal article" date="2004" name="Genome Res.">
        <title>The status, quality, and expansion of the NIH full-length cDNA project: the Mammalian Gene Collection (MGC).</title>
        <authorList>
            <consortium name="The MGC Project Team"/>
        </authorList>
    </citation>
    <scope>NUCLEOTIDE SEQUENCE [LARGE SCALE MRNA] (ISOFORM 1)</scope>
    <source>
        <tissue>Pancreas</tissue>
    </source>
</reference>
<reference key="6">
    <citation type="journal article" date="2004" name="Protein Sci.">
        <title>Signal peptide prediction based on analysis of experimentally verified cleavage sites.</title>
        <authorList>
            <person name="Zhang Z."/>
            <person name="Henzel W.J."/>
        </authorList>
    </citation>
    <scope>PROTEIN SEQUENCE OF 32-46</scope>
</reference>
<reference key="7">
    <citation type="journal article" date="1998" name="Neuron">
        <title>Artemin, a novel member of the GDNF ligand family, supports peripheral and central neurons and signals through the GFRalpha3-RET receptor complex.</title>
        <authorList>
            <person name="Baloh R.H."/>
            <person name="Tansey M.G."/>
            <person name="Lampe P.A."/>
            <person name="Fahrner T.J."/>
            <person name="Enomoto H."/>
            <person name="Simburger K.S."/>
            <person name="Leitner M.L."/>
            <person name="Araki T."/>
            <person name="Johnson E.M. Jr."/>
            <person name="Milbrandt J."/>
        </authorList>
    </citation>
    <scope>FUNCTION</scope>
</reference>
<reference key="8">
    <citation type="journal article" date="2013" name="Cell Rep.">
        <title>SorLA controls neurotrophic activity by sorting of GDNF and its receptors GFRalpha1 and RET.</title>
        <authorList>
            <person name="Glerup S."/>
            <person name="Lume M."/>
            <person name="Olsen D."/>
            <person name="Nyengaard J.R."/>
            <person name="Vaegter C.B."/>
            <person name="Gustafsen C."/>
            <person name="Christensen E.I."/>
            <person name="Kjolby M."/>
            <person name="Hay-Schmidt A."/>
            <person name="Bender D."/>
            <person name="Madsen P."/>
            <person name="Saarma M."/>
            <person name="Nykjaer A."/>
            <person name="Petersen C.M."/>
        </authorList>
    </citation>
    <scope>INTERACTION WITH SORL1</scope>
</reference>
<reference key="9">
    <citation type="journal article" date="2006" name="Structure">
        <title>Structure of artemin complexed with its receptor GFRalpha3: convergent recognition of glial cell line-derived neurotrophic factors.</title>
        <authorList>
            <person name="Wang X."/>
            <person name="Baloh R.H."/>
            <person name="Milbrandt J."/>
            <person name="Garcia K.C."/>
        </authorList>
    </citation>
    <scope>X-RAY CRYSTALLOGRAPHY (1.92 ANGSTROMS) OF 151-363 IN COMPLEX WITH ARTN</scope>
    <scope>DISULFIDE BONDS</scope>
    <scope>SUBUNIT</scope>
    <scope>GLYCOSYLATION AT ASN-309</scope>
</reference>
<reference evidence="13" key="10">
    <citation type="journal article" date="2019" name="Elife">
        <title>Cryo-EM analyses reveal the common mechanism and diversification in the activation of RET by different ligands.</title>
        <authorList>
            <person name="Li J."/>
            <person name="Shang G."/>
            <person name="Chen Y.J."/>
            <person name="Brautigam C.A."/>
            <person name="Liou J."/>
            <person name="Zhang X."/>
            <person name="Bai X.C."/>
        </authorList>
    </citation>
    <scope>STRUCTURE BY ELECTRON MICROSCOPY (3.80 ANGSTROMS) OF 32-363 IN COMPLEX WITH RET AND ARTN</scope>
    <scope>FUNCTION</scope>
    <scope>SUBUNIT</scope>
    <scope>DISULFIDE BONDS</scope>
</reference>
<protein>
    <recommendedName>
        <fullName>GDNF family receptor alpha-3</fullName>
        <shortName>GDNF receptor alpha-3</shortName>
        <shortName>GDNFR-alpha-3</shortName>
        <shortName>GFR-alpha-3</shortName>
    </recommendedName>
</protein>
<keyword id="KW-0002">3D-structure</keyword>
<keyword id="KW-0025">Alternative splicing</keyword>
<keyword id="KW-1003">Cell membrane</keyword>
<keyword id="KW-0903">Direct protein sequencing</keyword>
<keyword id="KW-1015">Disulfide bond</keyword>
<keyword id="KW-0325">Glycoprotein</keyword>
<keyword id="KW-0336">GPI-anchor</keyword>
<keyword id="KW-0449">Lipoprotein</keyword>
<keyword id="KW-0472">Membrane</keyword>
<keyword id="KW-1267">Proteomics identification</keyword>
<keyword id="KW-0675">Receptor</keyword>
<keyword id="KW-1185">Reference proteome</keyword>
<keyword id="KW-0732">Signal</keyword>
<name>GFRA3_HUMAN</name>
<sequence length="400" mass="44511">MVRPLNPRPLPPVVLMLLLLLPPSPLPLAAGDPLPTESRLMNSCLQARRKCQADPTCSAAYHHLDSCTSSISTPLPSEEPSVPADCLEAAQQLRNSSLIGCMCHRRMKNQVACLDIYWTVHRARSLGNYELDVSPYEDTVTSKPWKMNLSKLNMLKPDSDLCLKFAMLCTLNDKCDRLRKAYGEACSGPHCQRHVCLRQLLTFFEKAAEPHAQGLLLCPCAPNDRGCGERRRNTIAPNCALPPVAPNCLELRRLCFSDPLCRSRLVDFQTHCHPMDILGTCATEQSRCLRAYLGLIGTAMTPNFVSNVNTSVALSCTCRGSGNLQEECEMLEGFFSHNPCLTEAIAAKMRFHSQLFSQDWPHPTFAVMAHQNENPAVRPQPWVPSLFSCTLPLILLLSLW</sequence>
<dbReference type="EMBL" id="AF051767">
    <property type="protein sequence ID" value="AAC24355.1"/>
    <property type="molecule type" value="mRNA"/>
</dbReference>
<dbReference type="EMBL" id="AY358997">
    <property type="protein sequence ID" value="AAQ89356.1"/>
    <property type="molecule type" value="mRNA"/>
</dbReference>
<dbReference type="EMBL" id="AY359037">
    <property type="protein sequence ID" value="AAQ89396.1"/>
    <property type="molecule type" value="mRNA"/>
</dbReference>
<dbReference type="EMBL" id="AK297693">
    <property type="protein sequence ID" value="BAG60051.1"/>
    <property type="molecule type" value="mRNA"/>
</dbReference>
<dbReference type="EMBL" id="AK314022">
    <property type="protein sequence ID" value="BAG36733.1"/>
    <property type="molecule type" value="mRNA"/>
</dbReference>
<dbReference type="EMBL" id="CH471062">
    <property type="protein sequence ID" value="EAW62152.1"/>
    <property type="molecule type" value="Genomic_DNA"/>
</dbReference>
<dbReference type="EMBL" id="CH471062">
    <property type="protein sequence ID" value="EAW62153.1"/>
    <property type="molecule type" value="Genomic_DNA"/>
</dbReference>
<dbReference type="EMBL" id="BC037951">
    <property type="protein sequence ID" value="AAH37951.1"/>
    <property type="molecule type" value="mRNA"/>
</dbReference>
<dbReference type="CCDS" id="CCDS4201.1">
    <molecule id="O60609-1"/>
</dbReference>
<dbReference type="RefSeq" id="NP_001487.2">
    <molecule id="O60609-1"/>
    <property type="nucleotide sequence ID" value="NM_001496.3"/>
</dbReference>
<dbReference type="PDB" id="2GH0">
    <property type="method" value="X-ray"/>
    <property type="resolution" value="1.92 A"/>
    <property type="chains" value="A/B=151-363"/>
</dbReference>
<dbReference type="PDB" id="6Q2S">
    <property type="method" value="EM"/>
    <property type="resolution" value="3.80 A"/>
    <property type="chains" value="C/D=32-363"/>
</dbReference>
<dbReference type="PDBsum" id="2GH0"/>
<dbReference type="PDBsum" id="6Q2S"/>
<dbReference type="EMDB" id="EMD-20579"/>
<dbReference type="SMR" id="O60609"/>
<dbReference type="BioGRID" id="108944">
    <property type="interactions" value="19"/>
</dbReference>
<dbReference type="CORUM" id="O60609"/>
<dbReference type="DIP" id="DIP-29114N"/>
<dbReference type="FunCoup" id="O60609">
    <property type="interactions" value="14"/>
</dbReference>
<dbReference type="IntAct" id="O60609">
    <property type="interactions" value="11"/>
</dbReference>
<dbReference type="STRING" id="9606.ENSP00000274721"/>
<dbReference type="GlyCosmos" id="O60609">
    <property type="glycosylation" value="4 sites, 1 glycan"/>
</dbReference>
<dbReference type="GlyGen" id="O60609">
    <property type="glycosylation" value="4 sites, 1 O-linked glycan (1 site)"/>
</dbReference>
<dbReference type="iPTMnet" id="O60609"/>
<dbReference type="PhosphoSitePlus" id="O60609"/>
<dbReference type="BioMuta" id="GFRA3"/>
<dbReference type="MassIVE" id="O60609"/>
<dbReference type="PaxDb" id="9606-ENSP00000274721"/>
<dbReference type="PeptideAtlas" id="O60609"/>
<dbReference type="ProteomicsDB" id="49482">
    <molecule id="O60609-1"/>
</dbReference>
<dbReference type="ProteomicsDB" id="49483">
    <molecule id="O60609-2"/>
</dbReference>
<dbReference type="Antibodypedia" id="14907">
    <property type="antibodies" value="321 antibodies from 36 providers"/>
</dbReference>
<dbReference type="DNASU" id="2676"/>
<dbReference type="Ensembl" id="ENST00000274721.8">
    <molecule id="O60609-1"/>
    <property type="protein sequence ID" value="ENSP00000274721.3"/>
    <property type="gene ID" value="ENSG00000146013.12"/>
</dbReference>
<dbReference type="Ensembl" id="ENST00000378362.3">
    <molecule id="O60609-2"/>
    <property type="protein sequence ID" value="ENSP00000367613.3"/>
    <property type="gene ID" value="ENSG00000146013.12"/>
</dbReference>
<dbReference type="GeneID" id="2676"/>
<dbReference type="KEGG" id="hsa:2676"/>
<dbReference type="MANE-Select" id="ENST00000274721.8">
    <property type="protein sequence ID" value="ENSP00000274721.3"/>
    <property type="RefSeq nucleotide sequence ID" value="NM_001496.4"/>
    <property type="RefSeq protein sequence ID" value="NP_001487.2"/>
</dbReference>
<dbReference type="UCSC" id="uc003lcn.4">
    <molecule id="O60609-1"/>
    <property type="organism name" value="human"/>
</dbReference>
<dbReference type="AGR" id="HGNC:4245"/>
<dbReference type="CTD" id="2676"/>
<dbReference type="DisGeNET" id="2676"/>
<dbReference type="GeneCards" id="GFRA3"/>
<dbReference type="HGNC" id="HGNC:4245">
    <property type="gene designation" value="GFRA3"/>
</dbReference>
<dbReference type="HPA" id="ENSG00000146013">
    <property type="expression patterns" value="Tissue enhanced (intestine)"/>
</dbReference>
<dbReference type="MalaCards" id="GFRA3"/>
<dbReference type="MIM" id="605710">
    <property type="type" value="gene"/>
</dbReference>
<dbReference type="neXtProt" id="NX_O60609"/>
<dbReference type="OpenTargets" id="ENSG00000146013"/>
<dbReference type="PharmGKB" id="PA28655"/>
<dbReference type="VEuPathDB" id="HostDB:ENSG00000146013"/>
<dbReference type="eggNOG" id="ENOG502QWSW">
    <property type="taxonomic scope" value="Eukaryota"/>
</dbReference>
<dbReference type="GeneTree" id="ENSGT00940000161256"/>
<dbReference type="HOGENOM" id="CLU_040179_3_0_1"/>
<dbReference type="InParanoid" id="O60609"/>
<dbReference type="OMA" id="CNAAYQH"/>
<dbReference type="OrthoDB" id="9894700at2759"/>
<dbReference type="PAN-GO" id="O60609">
    <property type="GO annotations" value="4 GO annotations based on evolutionary models"/>
</dbReference>
<dbReference type="PhylomeDB" id="O60609"/>
<dbReference type="TreeFam" id="TF331647"/>
<dbReference type="PathwayCommons" id="O60609"/>
<dbReference type="Reactome" id="R-HSA-5673001">
    <property type="pathway name" value="RAF/MAP kinase cascade"/>
</dbReference>
<dbReference type="Reactome" id="R-HSA-8853659">
    <property type="pathway name" value="RET signaling"/>
</dbReference>
<dbReference type="SignaLink" id="O60609"/>
<dbReference type="SIGNOR" id="O60609"/>
<dbReference type="BioGRID-ORCS" id="2676">
    <property type="hits" value="14 hits in 1144 CRISPR screens"/>
</dbReference>
<dbReference type="ChiTaRS" id="GFRA3">
    <property type="organism name" value="human"/>
</dbReference>
<dbReference type="EvolutionaryTrace" id="O60609"/>
<dbReference type="GeneWiki" id="GFRA3"/>
<dbReference type="GenomeRNAi" id="2676"/>
<dbReference type="Pharos" id="O60609">
    <property type="development level" value="Tbio"/>
</dbReference>
<dbReference type="PRO" id="PR:O60609"/>
<dbReference type="Proteomes" id="UP000005640">
    <property type="component" value="Chromosome 5"/>
</dbReference>
<dbReference type="RNAct" id="O60609">
    <property type="molecule type" value="protein"/>
</dbReference>
<dbReference type="Bgee" id="ENSG00000146013">
    <property type="expression patterns" value="Expressed in dorsal root ganglion and 111 other cell types or tissues"/>
</dbReference>
<dbReference type="ExpressionAtlas" id="O60609">
    <property type="expression patterns" value="baseline and differential"/>
</dbReference>
<dbReference type="GO" id="GO:0005829">
    <property type="term" value="C:cytosol"/>
    <property type="evidence" value="ECO:0000314"/>
    <property type="project" value="HPA"/>
</dbReference>
<dbReference type="GO" id="GO:0009897">
    <property type="term" value="C:external side of plasma membrane"/>
    <property type="evidence" value="ECO:0000318"/>
    <property type="project" value="GO_Central"/>
</dbReference>
<dbReference type="GO" id="GO:0019898">
    <property type="term" value="C:extrinsic component of membrane"/>
    <property type="evidence" value="ECO:0000304"/>
    <property type="project" value="ProtInc"/>
</dbReference>
<dbReference type="GO" id="GO:0005886">
    <property type="term" value="C:plasma membrane"/>
    <property type="evidence" value="ECO:0000314"/>
    <property type="project" value="HPA"/>
</dbReference>
<dbReference type="GO" id="GO:0043235">
    <property type="term" value="C:receptor complex"/>
    <property type="evidence" value="ECO:0000318"/>
    <property type="project" value="GO_Central"/>
</dbReference>
<dbReference type="GO" id="GO:0008046">
    <property type="term" value="F:axon guidance receptor activity"/>
    <property type="evidence" value="ECO:0007669"/>
    <property type="project" value="Ensembl"/>
</dbReference>
<dbReference type="GO" id="GO:0016167">
    <property type="term" value="F:glial cell-derived neurotrophic factor receptor activity"/>
    <property type="evidence" value="ECO:0000314"/>
    <property type="project" value="UniProtKB"/>
</dbReference>
<dbReference type="GO" id="GO:0038023">
    <property type="term" value="F:signaling receptor activity"/>
    <property type="evidence" value="ECO:0000318"/>
    <property type="project" value="GO_Central"/>
</dbReference>
<dbReference type="GO" id="GO:0005102">
    <property type="term" value="F:signaling receptor binding"/>
    <property type="evidence" value="ECO:0000304"/>
    <property type="project" value="ProtInc"/>
</dbReference>
<dbReference type="GO" id="GO:0035860">
    <property type="term" value="P:glial cell-derived neurotrophic factor receptor signaling pathway"/>
    <property type="evidence" value="ECO:0000314"/>
    <property type="project" value="UniProtKB"/>
</dbReference>
<dbReference type="GO" id="GO:0007399">
    <property type="term" value="P:nervous system development"/>
    <property type="evidence" value="ECO:0000318"/>
    <property type="project" value="GO_Central"/>
</dbReference>
<dbReference type="GO" id="GO:0001764">
    <property type="term" value="P:neuron migration"/>
    <property type="evidence" value="ECO:0007669"/>
    <property type="project" value="Ensembl"/>
</dbReference>
<dbReference type="GO" id="GO:0007422">
    <property type="term" value="P:peripheral nervous system development"/>
    <property type="evidence" value="ECO:0000304"/>
    <property type="project" value="ProtInc"/>
</dbReference>
<dbReference type="GO" id="GO:0007165">
    <property type="term" value="P:signal transduction"/>
    <property type="evidence" value="ECO:0000304"/>
    <property type="project" value="ProtInc"/>
</dbReference>
<dbReference type="GO" id="GO:0048485">
    <property type="term" value="P:sympathetic nervous system development"/>
    <property type="evidence" value="ECO:0007669"/>
    <property type="project" value="Ensembl"/>
</dbReference>
<dbReference type="FunFam" id="1.10.220.110:FF:000002">
    <property type="entry name" value="GDNF family receptor alpha 3"/>
    <property type="match status" value="1"/>
</dbReference>
<dbReference type="Gene3D" id="1.10.220.110">
    <property type="entry name" value="GDNF binding domain"/>
    <property type="match status" value="1"/>
</dbReference>
<dbReference type="InterPro" id="IPR016017">
    <property type="entry name" value="GDNF/GAS1"/>
</dbReference>
<dbReference type="InterPro" id="IPR037193">
    <property type="entry name" value="GDNF_alpha"/>
</dbReference>
<dbReference type="InterPro" id="IPR003438">
    <property type="entry name" value="GDNF_rcpt"/>
</dbReference>
<dbReference type="InterPro" id="IPR003505">
    <property type="entry name" value="GDNF_rcpt_A3"/>
</dbReference>
<dbReference type="PANTHER" id="PTHR10269:SF15">
    <property type="entry name" value="GDNF FAMILY RECEPTOR ALPHA-3"/>
    <property type="match status" value="1"/>
</dbReference>
<dbReference type="PANTHER" id="PTHR10269">
    <property type="entry name" value="GDNF RECEPTOR ALPHA"/>
    <property type="match status" value="1"/>
</dbReference>
<dbReference type="Pfam" id="PF02351">
    <property type="entry name" value="GDNF"/>
    <property type="match status" value="3"/>
</dbReference>
<dbReference type="PRINTS" id="PR01319">
    <property type="entry name" value="GDNFRALPHA3"/>
</dbReference>
<dbReference type="PRINTS" id="PR01316">
    <property type="entry name" value="GDNFRECEPTOR"/>
</dbReference>
<dbReference type="SMART" id="SM00907">
    <property type="entry name" value="GDNF"/>
    <property type="match status" value="3"/>
</dbReference>
<dbReference type="SUPFAM" id="SSF110035">
    <property type="entry name" value="GDNF receptor-like"/>
    <property type="match status" value="1"/>
</dbReference>
<evidence type="ECO:0000250" key="1">
    <source>
        <dbReference type="UniProtKB" id="Q62997"/>
    </source>
</evidence>
<evidence type="ECO:0000255" key="2"/>
<evidence type="ECO:0000269" key="3">
    <source>
    </source>
</evidence>
<evidence type="ECO:0000269" key="4">
    <source>
    </source>
</evidence>
<evidence type="ECO:0000269" key="5">
    <source>
    </source>
</evidence>
<evidence type="ECO:0000269" key="6">
    <source>
    </source>
</evidence>
<evidence type="ECO:0000269" key="7">
    <source>
    </source>
</evidence>
<evidence type="ECO:0000269" key="8">
    <source>
    </source>
</evidence>
<evidence type="ECO:0000303" key="9">
    <source>
    </source>
</evidence>
<evidence type="ECO:0000303" key="10">
    <source>
    </source>
</evidence>
<evidence type="ECO:0000305" key="11"/>
<evidence type="ECO:0007744" key="12">
    <source>
        <dbReference type="PDB" id="2GH0"/>
    </source>
</evidence>
<evidence type="ECO:0007744" key="13">
    <source>
        <dbReference type="PDB" id="6Q2S"/>
    </source>
</evidence>
<evidence type="ECO:0007829" key="14">
    <source>
        <dbReference type="PDB" id="2GH0"/>
    </source>
</evidence>
<organism>
    <name type="scientific">Homo sapiens</name>
    <name type="common">Human</name>
    <dbReference type="NCBI Taxonomy" id="9606"/>
    <lineage>
        <taxon>Eukaryota</taxon>
        <taxon>Metazoa</taxon>
        <taxon>Chordata</taxon>
        <taxon>Craniata</taxon>
        <taxon>Vertebrata</taxon>
        <taxon>Euteleostomi</taxon>
        <taxon>Mammalia</taxon>
        <taxon>Eutheria</taxon>
        <taxon>Euarchontoglires</taxon>
        <taxon>Primates</taxon>
        <taxon>Haplorrhini</taxon>
        <taxon>Catarrhini</taxon>
        <taxon>Hominidae</taxon>
        <taxon>Homo</taxon>
    </lineage>
</organism>
<feature type="signal peptide" evidence="3">
    <location>
        <begin position="1"/>
        <end position="31"/>
    </location>
</feature>
<feature type="chain" id="PRO_0000010789" description="GDNF family receptor alpha-3">
    <location>
        <begin position="32"/>
        <end position="374"/>
    </location>
</feature>
<feature type="propeptide" id="PRO_0000010790" description="Removed in mature form" evidence="2">
    <location>
        <begin position="375"/>
        <end position="400"/>
    </location>
</feature>
<feature type="lipid moiety-binding region" description="GPI-anchor amidated asparagine" evidence="2">
    <location>
        <position position="374"/>
    </location>
</feature>
<feature type="glycosylation site" description="N-linked (GlcNAc...) asparagine" evidence="2">
    <location>
        <position position="95"/>
    </location>
</feature>
<feature type="glycosylation site" description="N-linked (GlcNAc...) asparagine" evidence="2">
    <location>
        <position position="148"/>
    </location>
</feature>
<feature type="glycosylation site" description="N-linked (GlcNAc...) asparagine" evidence="4 12">
    <location>
        <position position="309"/>
    </location>
</feature>
<feature type="disulfide bond" evidence="1">
    <location>
        <begin position="51"/>
        <end position="57"/>
    </location>
</feature>
<feature type="disulfide bond" evidence="4 6 12 13">
    <location>
        <begin position="162"/>
        <end position="218"/>
    </location>
</feature>
<feature type="disulfide bond" evidence="4 6 12 13">
    <location>
        <begin position="169"/>
        <end position="175"/>
    </location>
</feature>
<feature type="disulfide bond" evidence="4 6 12 13">
    <location>
        <begin position="186"/>
        <end position="196"/>
    </location>
</feature>
<feature type="disulfide bond" evidence="4 6 12 13">
    <location>
        <begin position="191"/>
        <end position="239"/>
    </location>
</feature>
<feature type="disulfide bond" evidence="4 12">
    <location>
        <begin position="220"/>
        <end position="227"/>
    </location>
</feature>
<feature type="disulfide bond" evidence="4 6 12 13">
    <location>
        <begin position="248"/>
        <end position="316"/>
    </location>
</feature>
<feature type="disulfide bond" evidence="4 6 12 13">
    <location>
        <begin position="255"/>
        <end position="261"/>
    </location>
</feature>
<feature type="disulfide bond" evidence="4 6 12 13">
    <location>
        <begin position="272"/>
        <end position="288"/>
    </location>
</feature>
<feature type="disulfide bond" evidence="4 6 12 13">
    <location>
        <begin position="281"/>
        <end position="340"/>
    </location>
</feature>
<feature type="disulfide bond" evidence="4 6 12 13">
    <location>
        <begin position="318"/>
        <end position="328"/>
    </location>
</feature>
<feature type="splice variant" id="VSP_010942" description="In isoform 2." evidence="9 10">
    <location>
        <begin position="127"/>
        <end position="157"/>
    </location>
</feature>
<feature type="sequence conflict" description="In Ref. 1; AAC24355." evidence="11" ref="1">
    <original>K</original>
    <variation>R</variation>
    <location>
        <position position="108"/>
    </location>
</feature>
<feature type="helix" evidence="14">
    <location>
        <begin position="161"/>
        <end position="170"/>
    </location>
</feature>
<feature type="helix" evidence="14">
    <location>
        <begin position="173"/>
        <end position="185"/>
    </location>
</feature>
<feature type="turn" evidence="14">
    <location>
        <begin position="188"/>
        <end position="190"/>
    </location>
</feature>
<feature type="helix" evidence="14">
    <location>
        <begin position="193"/>
        <end position="206"/>
    </location>
</feature>
<feature type="helix" evidence="14">
    <location>
        <begin position="209"/>
        <end position="216"/>
    </location>
</feature>
<feature type="helix" evidence="14">
    <location>
        <begin position="225"/>
        <end position="233"/>
    </location>
</feature>
<feature type="helix" evidence="14">
    <location>
        <begin position="237"/>
        <end position="240"/>
    </location>
</feature>
<feature type="helix" evidence="14">
    <location>
        <begin position="248"/>
        <end position="256"/>
    </location>
</feature>
<feature type="helix" evidence="14">
    <location>
        <begin position="259"/>
        <end position="271"/>
    </location>
</feature>
<feature type="strand" evidence="14">
    <location>
        <begin position="274"/>
        <end position="276"/>
    </location>
</feature>
<feature type="strand" evidence="14">
    <location>
        <begin position="281"/>
        <end position="283"/>
    </location>
</feature>
<feature type="helix" evidence="14">
    <location>
        <begin position="285"/>
        <end position="293"/>
    </location>
</feature>
<feature type="turn" evidence="14">
    <location>
        <begin position="294"/>
        <end position="297"/>
    </location>
</feature>
<feature type="strand" evidence="14">
    <location>
        <begin position="302"/>
        <end position="304"/>
    </location>
</feature>
<feature type="strand" evidence="14">
    <location>
        <begin position="307"/>
        <end position="309"/>
    </location>
</feature>
<feature type="strand" evidence="14">
    <location>
        <begin position="312"/>
        <end position="315"/>
    </location>
</feature>
<feature type="helix" evidence="14">
    <location>
        <begin position="322"/>
        <end position="324"/>
    </location>
</feature>
<feature type="helix" evidence="14">
    <location>
        <begin position="325"/>
        <end position="336"/>
    </location>
</feature>
<feature type="helix" evidence="14">
    <location>
        <begin position="339"/>
        <end position="355"/>
    </location>
</feature>
<accession>O60609</accession>
<accession>B2RA36</accession>
<accession>B4DMY9</accession>
<accession>Q6UW20</accession>
<accession>Q8IUZ2</accession>
<proteinExistence type="evidence at protein level"/>
<gene>
    <name type="primary">GFRA3</name>
    <name type="ORF">UNQ339/PRO538/PRO3664</name>
</gene>